<protein>
    <recommendedName>
        <fullName evidence="1">Asparagine--tRNA ligase</fullName>
        <ecNumber evidence="1">6.1.1.22</ecNumber>
    </recommendedName>
    <alternativeName>
        <fullName evidence="1">Asparaginyl-tRNA synthetase</fullName>
        <shortName evidence="1">AsnRS</shortName>
    </alternativeName>
</protein>
<keyword id="KW-0030">Aminoacyl-tRNA synthetase</keyword>
<keyword id="KW-0067">ATP-binding</keyword>
<keyword id="KW-0963">Cytoplasm</keyword>
<keyword id="KW-0436">Ligase</keyword>
<keyword id="KW-0547">Nucleotide-binding</keyword>
<keyword id="KW-0648">Protein biosynthesis</keyword>
<proteinExistence type="inferred from homology"/>
<comment type="catalytic activity">
    <reaction evidence="1">
        <text>tRNA(Asn) + L-asparagine + ATP = L-asparaginyl-tRNA(Asn) + AMP + diphosphate + H(+)</text>
        <dbReference type="Rhea" id="RHEA:11180"/>
        <dbReference type="Rhea" id="RHEA-COMP:9659"/>
        <dbReference type="Rhea" id="RHEA-COMP:9674"/>
        <dbReference type="ChEBI" id="CHEBI:15378"/>
        <dbReference type="ChEBI" id="CHEBI:30616"/>
        <dbReference type="ChEBI" id="CHEBI:33019"/>
        <dbReference type="ChEBI" id="CHEBI:58048"/>
        <dbReference type="ChEBI" id="CHEBI:78442"/>
        <dbReference type="ChEBI" id="CHEBI:78515"/>
        <dbReference type="ChEBI" id="CHEBI:456215"/>
        <dbReference type="EC" id="6.1.1.22"/>
    </reaction>
</comment>
<comment type="subunit">
    <text evidence="1">Homodimer.</text>
</comment>
<comment type="subcellular location">
    <subcellularLocation>
        <location evidence="1">Cytoplasm</location>
    </subcellularLocation>
</comment>
<comment type="similarity">
    <text evidence="1">Belongs to the class-II aminoacyl-tRNA synthetase family.</text>
</comment>
<feature type="chain" id="PRO_1000051397" description="Asparagine--tRNA ligase">
    <location>
        <begin position="1"/>
        <end position="467"/>
    </location>
</feature>
<dbReference type="EC" id="6.1.1.22" evidence="1"/>
<dbReference type="EMBL" id="CP000672">
    <property type="protein sequence ID" value="ABQ99371.1"/>
    <property type="molecule type" value="Genomic_DNA"/>
</dbReference>
<dbReference type="SMR" id="A5UF16"/>
<dbReference type="KEGG" id="hiq:CGSHiGG_01450"/>
<dbReference type="HOGENOM" id="CLU_004553_2_0_6"/>
<dbReference type="Proteomes" id="UP000001990">
    <property type="component" value="Chromosome"/>
</dbReference>
<dbReference type="GO" id="GO:0005737">
    <property type="term" value="C:cytoplasm"/>
    <property type="evidence" value="ECO:0007669"/>
    <property type="project" value="UniProtKB-SubCell"/>
</dbReference>
<dbReference type="GO" id="GO:0004816">
    <property type="term" value="F:asparagine-tRNA ligase activity"/>
    <property type="evidence" value="ECO:0007669"/>
    <property type="project" value="UniProtKB-UniRule"/>
</dbReference>
<dbReference type="GO" id="GO:0005524">
    <property type="term" value="F:ATP binding"/>
    <property type="evidence" value="ECO:0007669"/>
    <property type="project" value="UniProtKB-UniRule"/>
</dbReference>
<dbReference type="GO" id="GO:0003676">
    <property type="term" value="F:nucleic acid binding"/>
    <property type="evidence" value="ECO:0007669"/>
    <property type="project" value="InterPro"/>
</dbReference>
<dbReference type="GO" id="GO:0006421">
    <property type="term" value="P:asparaginyl-tRNA aminoacylation"/>
    <property type="evidence" value="ECO:0007669"/>
    <property type="project" value="UniProtKB-UniRule"/>
</dbReference>
<dbReference type="CDD" id="cd00776">
    <property type="entry name" value="AsxRS_core"/>
    <property type="match status" value="1"/>
</dbReference>
<dbReference type="CDD" id="cd04318">
    <property type="entry name" value="EcAsnRS_like_N"/>
    <property type="match status" value="1"/>
</dbReference>
<dbReference type="FunFam" id="3.30.930.10:FF:000016">
    <property type="entry name" value="Asparagine--tRNA ligase"/>
    <property type="match status" value="1"/>
</dbReference>
<dbReference type="Gene3D" id="3.30.930.10">
    <property type="entry name" value="Bira Bifunctional Protein, Domain 2"/>
    <property type="match status" value="1"/>
</dbReference>
<dbReference type="Gene3D" id="2.40.50.140">
    <property type="entry name" value="Nucleic acid-binding proteins"/>
    <property type="match status" value="1"/>
</dbReference>
<dbReference type="HAMAP" id="MF_00534">
    <property type="entry name" value="Asn_tRNA_synth"/>
    <property type="match status" value="1"/>
</dbReference>
<dbReference type="InterPro" id="IPR004364">
    <property type="entry name" value="Aa-tRNA-synt_II"/>
</dbReference>
<dbReference type="InterPro" id="IPR006195">
    <property type="entry name" value="aa-tRNA-synth_II"/>
</dbReference>
<dbReference type="InterPro" id="IPR045864">
    <property type="entry name" value="aa-tRNA-synth_II/BPL/LPL"/>
</dbReference>
<dbReference type="InterPro" id="IPR004522">
    <property type="entry name" value="Asn-tRNA-ligase"/>
</dbReference>
<dbReference type="InterPro" id="IPR002312">
    <property type="entry name" value="Asp/Asn-tRNA-synth_IIb"/>
</dbReference>
<dbReference type="InterPro" id="IPR012340">
    <property type="entry name" value="NA-bd_OB-fold"/>
</dbReference>
<dbReference type="InterPro" id="IPR004365">
    <property type="entry name" value="NA-bd_OB_tRNA"/>
</dbReference>
<dbReference type="NCBIfam" id="TIGR00457">
    <property type="entry name" value="asnS"/>
    <property type="match status" value="1"/>
</dbReference>
<dbReference type="NCBIfam" id="NF003037">
    <property type="entry name" value="PRK03932.1"/>
    <property type="match status" value="1"/>
</dbReference>
<dbReference type="PANTHER" id="PTHR22594:SF34">
    <property type="entry name" value="ASPARAGINE--TRNA LIGASE, MITOCHONDRIAL-RELATED"/>
    <property type="match status" value="1"/>
</dbReference>
<dbReference type="PANTHER" id="PTHR22594">
    <property type="entry name" value="ASPARTYL/LYSYL-TRNA SYNTHETASE"/>
    <property type="match status" value="1"/>
</dbReference>
<dbReference type="Pfam" id="PF00152">
    <property type="entry name" value="tRNA-synt_2"/>
    <property type="match status" value="1"/>
</dbReference>
<dbReference type="Pfam" id="PF01336">
    <property type="entry name" value="tRNA_anti-codon"/>
    <property type="match status" value="1"/>
</dbReference>
<dbReference type="PRINTS" id="PR01042">
    <property type="entry name" value="TRNASYNTHASP"/>
</dbReference>
<dbReference type="SUPFAM" id="SSF55681">
    <property type="entry name" value="Class II aaRS and biotin synthetases"/>
    <property type="match status" value="1"/>
</dbReference>
<dbReference type="SUPFAM" id="SSF50249">
    <property type="entry name" value="Nucleic acid-binding proteins"/>
    <property type="match status" value="1"/>
</dbReference>
<dbReference type="PROSITE" id="PS50862">
    <property type="entry name" value="AA_TRNA_LIGASE_II"/>
    <property type="match status" value="1"/>
</dbReference>
<organism>
    <name type="scientific">Haemophilus influenzae (strain PittGG)</name>
    <dbReference type="NCBI Taxonomy" id="374931"/>
    <lineage>
        <taxon>Bacteria</taxon>
        <taxon>Pseudomonadati</taxon>
        <taxon>Pseudomonadota</taxon>
        <taxon>Gammaproteobacteria</taxon>
        <taxon>Pasteurellales</taxon>
        <taxon>Pasteurellaceae</taxon>
        <taxon>Haemophilus</taxon>
    </lineage>
</organism>
<reference key="1">
    <citation type="journal article" date="2007" name="Genome Biol.">
        <title>Characterization and modeling of the Haemophilus influenzae core and supragenomes based on the complete genomic sequences of Rd and 12 clinical nontypeable strains.</title>
        <authorList>
            <person name="Hogg J.S."/>
            <person name="Hu F.Z."/>
            <person name="Janto B."/>
            <person name="Boissy R."/>
            <person name="Hayes J."/>
            <person name="Keefe R."/>
            <person name="Post J.C."/>
            <person name="Ehrlich G.D."/>
        </authorList>
    </citation>
    <scope>NUCLEOTIDE SEQUENCE [LARGE SCALE GENOMIC DNA]</scope>
    <source>
        <strain>PittGG</strain>
    </source>
</reference>
<name>SYN_HAEIG</name>
<evidence type="ECO:0000255" key="1">
    <source>
        <dbReference type="HAMAP-Rule" id="MF_00534"/>
    </source>
</evidence>
<sequence length="467" mass="52775">MSKVASIVDVLQGKVAIGETVTVRGWVRTRRDSKAGLSFLAVYDGSCFDPIQAIINNDIENYESEILRLTTGCSVIVTGKVVESPAEGQAVELQAEKVEVTGFVEDPDTYPMAAKRHSIEYLREVAHLRPRTNIIGAVARVRHCLSQAIHRFFHEQGFYWVATPLITASDTEGAGEMFRVSTLDLENLPRSENGKVDFSQDFFGKESFLTVSGQLNGETYACALSKIYTFGPTFRAENSNTTRHLAEFWMVEPEVAFATLADNAKLAEDMLKYVFRAVLAERKDDLQFFEKHVDKDVITRLENFVNSDFAQIDYTDAIDVLLKSGKKFEFPVSWGIDLSSEHERFLAEEYFKSPVVVKNYPKDIKAFYMRLNDDGKTVAAMDVLAPGIGEIIGGSQREERLEVLDKRMEEMGLNPDDYWWYRDLRKYGSVPHSGFGLGFERLIVYVTGVQNIRDVIPFPRAPRNANF</sequence>
<accession>A5UF16</accession>
<gene>
    <name evidence="1" type="primary">asnS</name>
    <name type="ordered locus">CGSHiGG_01450</name>
</gene>